<organism>
    <name type="scientific">Rhodopseudomonas palustris (strain TIE-1)</name>
    <dbReference type="NCBI Taxonomy" id="395960"/>
    <lineage>
        <taxon>Bacteria</taxon>
        <taxon>Pseudomonadati</taxon>
        <taxon>Pseudomonadota</taxon>
        <taxon>Alphaproteobacteria</taxon>
        <taxon>Hyphomicrobiales</taxon>
        <taxon>Nitrobacteraceae</taxon>
        <taxon>Rhodopseudomonas</taxon>
    </lineage>
</organism>
<gene>
    <name evidence="1" type="primary">rpsO</name>
    <name type="ordered locus">Rpal_0437</name>
</gene>
<dbReference type="EMBL" id="CP001096">
    <property type="protein sequence ID" value="ACE98997.1"/>
    <property type="molecule type" value="Genomic_DNA"/>
</dbReference>
<dbReference type="RefSeq" id="WP_011156001.1">
    <property type="nucleotide sequence ID" value="NC_011004.1"/>
</dbReference>
<dbReference type="SMR" id="B3QAB1"/>
<dbReference type="GeneID" id="66891448"/>
<dbReference type="KEGG" id="rpt:Rpal_0437"/>
<dbReference type="HOGENOM" id="CLU_148518_0_0_5"/>
<dbReference type="OrthoDB" id="9799262at2"/>
<dbReference type="Proteomes" id="UP000001725">
    <property type="component" value="Chromosome"/>
</dbReference>
<dbReference type="GO" id="GO:0022627">
    <property type="term" value="C:cytosolic small ribosomal subunit"/>
    <property type="evidence" value="ECO:0007669"/>
    <property type="project" value="TreeGrafter"/>
</dbReference>
<dbReference type="GO" id="GO:0019843">
    <property type="term" value="F:rRNA binding"/>
    <property type="evidence" value="ECO:0007669"/>
    <property type="project" value="UniProtKB-UniRule"/>
</dbReference>
<dbReference type="GO" id="GO:0003735">
    <property type="term" value="F:structural constituent of ribosome"/>
    <property type="evidence" value="ECO:0007669"/>
    <property type="project" value="InterPro"/>
</dbReference>
<dbReference type="GO" id="GO:0006412">
    <property type="term" value="P:translation"/>
    <property type="evidence" value="ECO:0007669"/>
    <property type="project" value="UniProtKB-UniRule"/>
</dbReference>
<dbReference type="CDD" id="cd00353">
    <property type="entry name" value="Ribosomal_S15p_S13e"/>
    <property type="match status" value="1"/>
</dbReference>
<dbReference type="FunFam" id="1.10.287.10:FF:000002">
    <property type="entry name" value="30S ribosomal protein S15"/>
    <property type="match status" value="1"/>
</dbReference>
<dbReference type="Gene3D" id="6.10.250.3130">
    <property type="match status" value="1"/>
</dbReference>
<dbReference type="Gene3D" id="1.10.287.10">
    <property type="entry name" value="S15/NS1, RNA-binding"/>
    <property type="match status" value="1"/>
</dbReference>
<dbReference type="HAMAP" id="MF_01343_B">
    <property type="entry name" value="Ribosomal_uS15_B"/>
    <property type="match status" value="1"/>
</dbReference>
<dbReference type="InterPro" id="IPR000589">
    <property type="entry name" value="Ribosomal_uS15"/>
</dbReference>
<dbReference type="InterPro" id="IPR005290">
    <property type="entry name" value="Ribosomal_uS15_bac-type"/>
</dbReference>
<dbReference type="InterPro" id="IPR009068">
    <property type="entry name" value="uS15_NS1_RNA-bd_sf"/>
</dbReference>
<dbReference type="NCBIfam" id="TIGR00952">
    <property type="entry name" value="S15_bact"/>
    <property type="match status" value="1"/>
</dbReference>
<dbReference type="PANTHER" id="PTHR23321">
    <property type="entry name" value="RIBOSOMAL PROTEIN S15, BACTERIAL AND ORGANELLAR"/>
    <property type="match status" value="1"/>
</dbReference>
<dbReference type="PANTHER" id="PTHR23321:SF26">
    <property type="entry name" value="SMALL RIBOSOMAL SUBUNIT PROTEIN US15M"/>
    <property type="match status" value="1"/>
</dbReference>
<dbReference type="Pfam" id="PF00312">
    <property type="entry name" value="Ribosomal_S15"/>
    <property type="match status" value="1"/>
</dbReference>
<dbReference type="SMART" id="SM01387">
    <property type="entry name" value="Ribosomal_S15"/>
    <property type="match status" value="1"/>
</dbReference>
<dbReference type="SUPFAM" id="SSF47060">
    <property type="entry name" value="S15/NS1 RNA-binding domain"/>
    <property type="match status" value="1"/>
</dbReference>
<dbReference type="PROSITE" id="PS00362">
    <property type="entry name" value="RIBOSOMAL_S15"/>
    <property type="match status" value="1"/>
</dbReference>
<comment type="function">
    <text evidence="1">One of the primary rRNA binding proteins, it binds directly to 16S rRNA where it helps nucleate assembly of the platform of the 30S subunit by binding and bridging several RNA helices of the 16S rRNA.</text>
</comment>
<comment type="function">
    <text evidence="1">Forms an intersubunit bridge (bridge B4) with the 23S rRNA of the 50S subunit in the ribosome.</text>
</comment>
<comment type="subunit">
    <text evidence="1">Part of the 30S ribosomal subunit. Forms a bridge to the 50S subunit in the 70S ribosome, contacting the 23S rRNA.</text>
</comment>
<comment type="similarity">
    <text evidence="1">Belongs to the universal ribosomal protein uS15 family.</text>
</comment>
<reference key="1">
    <citation type="submission" date="2008-05" db="EMBL/GenBank/DDBJ databases">
        <title>Complete sequence of Rhodopseudomonas palustris TIE-1.</title>
        <authorList>
            <consortium name="US DOE Joint Genome Institute"/>
            <person name="Lucas S."/>
            <person name="Copeland A."/>
            <person name="Lapidus A."/>
            <person name="Glavina del Rio T."/>
            <person name="Dalin E."/>
            <person name="Tice H."/>
            <person name="Pitluck S."/>
            <person name="Chain P."/>
            <person name="Malfatti S."/>
            <person name="Shin M."/>
            <person name="Vergez L."/>
            <person name="Lang D."/>
            <person name="Schmutz J."/>
            <person name="Larimer F."/>
            <person name="Land M."/>
            <person name="Hauser L."/>
            <person name="Kyrpides N."/>
            <person name="Mikhailova N."/>
            <person name="Emerson D."/>
            <person name="Newman D.K."/>
            <person name="Roden E."/>
            <person name="Richardson P."/>
        </authorList>
    </citation>
    <scope>NUCLEOTIDE SEQUENCE [LARGE SCALE GENOMIC DNA]</scope>
    <source>
        <strain>TIE-1</strain>
    </source>
</reference>
<keyword id="KW-0687">Ribonucleoprotein</keyword>
<keyword id="KW-0689">Ribosomal protein</keyword>
<keyword id="KW-0694">RNA-binding</keyword>
<keyword id="KW-0699">rRNA-binding</keyword>
<name>RS15_RHOPT</name>
<feature type="chain" id="PRO_1000143161" description="Small ribosomal subunit protein uS15">
    <location>
        <begin position="1"/>
        <end position="89"/>
    </location>
</feature>
<feature type="region of interest" description="Disordered" evidence="2">
    <location>
        <begin position="1"/>
        <end position="24"/>
    </location>
</feature>
<feature type="compositionally biased region" description="Basic and acidic residues" evidence="2">
    <location>
        <begin position="1"/>
        <end position="11"/>
    </location>
</feature>
<accession>B3QAB1</accession>
<sequence>MSITAERKAEVIKTSATKAGDTGSPEVQVAILSERITNLTAHFKTHTKDNHSRRGLLKLVSTRRSLLDYIKKKDEARYKALLEKHNIRR</sequence>
<protein>
    <recommendedName>
        <fullName evidence="1">Small ribosomal subunit protein uS15</fullName>
    </recommendedName>
    <alternativeName>
        <fullName evidence="3">30S ribosomal protein S15</fullName>
    </alternativeName>
</protein>
<proteinExistence type="inferred from homology"/>
<evidence type="ECO:0000255" key="1">
    <source>
        <dbReference type="HAMAP-Rule" id="MF_01343"/>
    </source>
</evidence>
<evidence type="ECO:0000256" key="2">
    <source>
        <dbReference type="SAM" id="MobiDB-lite"/>
    </source>
</evidence>
<evidence type="ECO:0000305" key="3"/>